<dbReference type="EC" id="4.2.1.134" evidence="3"/>
<dbReference type="EMBL" id="AL606602">
    <property type="protein sequence ID" value="CAE01738.2"/>
    <property type="molecule type" value="Genomic_DNA"/>
</dbReference>
<dbReference type="EMBL" id="AL663014">
    <property type="protein sequence ID" value="CAD39891.2"/>
    <property type="molecule type" value="Genomic_DNA"/>
</dbReference>
<dbReference type="EMBL" id="AP008210">
    <property type="protein sequence ID" value="BAF14258.1"/>
    <property type="molecule type" value="Genomic_DNA"/>
</dbReference>
<dbReference type="EMBL" id="AP014960">
    <property type="protein sequence ID" value="BAS88329.1"/>
    <property type="molecule type" value="Genomic_DNA"/>
</dbReference>
<dbReference type="EMBL" id="CM000141">
    <property type="protein sequence ID" value="EEE60642.1"/>
    <property type="molecule type" value="Genomic_DNA"/>
</dbReference>
<dbReference type="EMBL" id="AK060035">
    <property type="protein sequence ID" value="BAG87283.1"/>
    <property type="molecule type" value="mRNA"/>
</dbReference>
<dbReference type="RefSeq" id="XP_015633753.1">
    <property type="nucleotide sequence ID" value="XM_015778267.1"/>
</dbReference>
<dbReference type="RefSeq" id="XP_015633754.1">
    <property type="nucleotide sequence ID" value="XM_015778268.1"/>
</dbReference>
<dbReference type="FunCoup" id="Q7XSZ4">
    <property type="interactions" value="1983"/>
</dbReference>
<dbReference type="STRING" id="39947.Q7XSZ4"/>
<dbReference type="PaxDb" id="39947-Q7XSZ4"/>
<dbReference type="EnsemblPlants" id="Os04t0271200-01">
    <property type="protein sequence ID" value="Os04t0271200-01"/>
    <property type="gene ID" value="Os04g0271200"/>
</dbReference>
<dbReference type="Gramene" id="Os04t0271200-01">
    <property type="protein sequence ID" value="Os04t0271200-01"/>
    <property type="gene ID" value="Os04g0271200"/>
</dbReference>
<dbReference type="KEGG" id="dosa:Os04g0271200"/>
<dbReference type="eggNOG" id="KOG3187">
    <property type="taxonomic scope" value="Eukaryota"/>
</dbReference>
<dbReference type="HOGENOM" id="CLU_034302_0_0_1"/>
<dbReference type="InParanoid" id="Q7XSZ4"/>
<dbReference type="OMA" id="MYLFHDR"/>
<dbReference type="OrthoDB" id="46988at2759"/>
<dbReference type="UniPathway" id="UPA00094"/>
<dbReference type="Proteomes" id="UP000000763">
    <property type="component" value="Chromosome 4"/>
</dbReference>
<dbReference type="Proteomes" id="UP000007752">
    <property type="component" value="Chromosome 4"/>
</dbReference>
<dbReference type="Proteomes" id="UP000059680">
    <property type="component" value="Chromosome 4"/>
</dbReference>
<dbReference type="GO" id="GO:0005789">
    <property type="term" value="C:endoplasmic reticulum membrane"/>
    <property type="evidence" value="ECO:0000318"/>
    <property type="project" value="GO_Central"/>
</dbReference>
<dbReference type="GO" id="GO:0018812">
    <property type="term" value="F:3-hydroxyacyl-CoA dehydratase activity"/>
    <property type="evidence" value="ECO:0000318"/>
    <property type="project" value="GO_Central"/>
</dbReference>
<dbReference type="GO" id="GO:0102158">
    <property type="term" value="F:very-long-chain (3R)-3-hydroxyacyl-CoA dehydratase activity"/>
    <property type="evidence" value="ECO:0007669"/>
    <property type="project" value="UniProtKB-EC"/>
</dbReference>
<dbReference type="GO" id="GO:0030497">
    <property type="term" value="P:fatty acid elongation"/>
    <property type="evidence" value="ECO:0000318"/>
    <property type="project" value="GO_Central"/>
</dbReference>
<dbReference type="GO" id="GO:0030148">
    <property type="term" value="P:sphingolipid biosynthetic process"/>
    <property type="evidence" value="ECO:0000318"/>
    <property type="project" value="GO_Central"/>
</dbReference>
<dbReference type="GO" id="GO:0042761">
    <property type="term" value="P:very long-chain fatty acid biosynthetic process"/>
    <property type="evidence" value="ECO:0000318"/>
    <property type="project" value="GO_Central"/>
</dbReference>
<dbReference type="InterPro" id="IPR007482">
    <property type="entry name" value="Tyr_Pase-like_PTPLA"/>
</dbReference>
<dbReference type="PANTHER" id="PTHR11035">
    <property type="entry name" value="VERY-LONG-CHAIN (3R)-3-HYDROXYACYL-COA DEHYDRATASE"/>
    <property type="match status" value="1"/>
</dbReference>
<dbReference type="PANTHER" id="PTHR11035:SF3">
    <property type="entry name" value="VERY-LONG-CHAIN (3R)-3-HYDROXYACYL-COA DEHYDRATASE"/>
    <property type="match status" value="1"/>
</dbReference>
<dbReference type="Pfam" id="PF04387">
    <property type="entry name" value="PTPLA"/>
    <property type="match status" value="1"/>
</dbReference>
<reference key="1">
    <citation type="journal article" date="2002" name="Nature">
        <title>Sequence and analysis of rice chromosome 4.</title>
        <authorList>
            <person name="Feng Q."/>
            <person name="Zhang Y."/>
            <person name="Hao P."/>
            <person name="Wang S."/>
            <person name="Fu G."/>
            <person name="Huang Y."/>
            <person name="Li Y."/>
            <person name="Zhu J."/>
            <person name="Liu Y."/>
            <person name="Hu X."/>
            <person name="Jia P."/>
            <person name="Zhang Y."/>
            <person name="Zhao Q."/>
            <person name="Ying K."/>
            <person name="Yu S."/>
            <person name="Tang Y."/>
            <person name="Weng Q."/>
            <person name="Zhang L."/>
            <person name="Lu Y."/>
            <person name="Mu J."/>
            <person name="Lu Y."/>
            <person name="Zhang L.S."/>
            <person name="Yu Z."/>
            <person name="Fan D."/>
            <person name="Liu X."/>
            <person name="Lu T."/>
            <person name="Li C."/>
            <person name="Wu Y."/>
            <person name="Sun T."/>
            <person name="Lei H."/>
            <person name="Li T."/>
            <person name="Hu H."/>
            <person name="Guan J."/>
            <person name="Wu M."/>
            <person name="Zhang R."/>
            <person name="Zhou B."/>
            <person name="Chen Z."/>
            <person name="Chen L."/>
            <person name="Jin Z."/>
            <person name="Wang R."/>
            <person name="Yin H."/>
            <person name="Cai Z."/>
            <person name="Ren S."/>
            <person name="Lv G."/>
            <person name="Gu W."/>
            <person name="Zhu G."/>
            <person name="Tu Y."/>
            <person name="Jia J."/>
            <person name="Zhang Y."/>
            <person name="Chen J."/>
            <person name="Kang H."/>
            <person name="Chen X."/>
            <person name="Shao C."/>
            <person name="Sun Y."/>
            <person name="Hu Q."/>
            <person name="Zhang X."/>
            <person name="Zhang W."/>
            <person name="Wang L."/>
            <person name="Ding C."/>
            <person name="Sheng H."/>
            <person name="Gu J."/>
            <person name="Chen S."/>
            <person name="Ni L."/>
            <person name="Zhu F."/>
            <person name="Chen W."/>
            <person name="Lan L."/>
            <person name="Lai Y."/>
            <person name="Cheng Z."/>
            <person name="Gu M."/>
            <person name="Jiang J."/>
            <person name="Li J."/>
            <person name="Hong G."/>
            <person name="Xue Y."/>
            <person name="Han B."/>
        </authorList>
    </citation>
    <scope>NUCLEOTIDE SEQUENCE [LARGE SCALE GENOMIC DNA]</scope>
    <source>
        <strain>cv. Nipponbare</strain>
    </source>
</reference>
<reference key="2">
    <citation type="journal article" date="2005" name="Nature">
        <title>The map-based sequence of the rice genome.</title>
        <authorList>
            <consortium name="International rice genome sequencing project (IRGSP)"/>
        </authorList>
    </citation>
    <scope>NUCLEOTIDE SEQUENCE [LARGE SCALE GENOMIC DNA]</scope>
    <source>
        <strain>cv. Nipponbare</strain>
    </source>
</reference>
<reference key="3">
    <citation type="journal article" date="2008" name="Nucleic Acids Res.">
        <title>The rice annotation project database (RAP-DB): 2008 update.</title>
        <authorList>
            <consortium name="The rice annotation project (RAP)"/>
        </authorList>
    </citation>
    <scope>GENOME REANNOTATION</scope>
    <source>
        <strain>cv. Nipponbare</strain>
    </source>
</reference>
<reference key="4">
    <citation type="journal article" date="2013" name="Rice">
        <title>Improvement of the Oryza sativa Nipponbare reference genome using next generation sequence and optical map data.</title>
        <authorList>
            <person name="Kawahara Y."/>
            <person name="de la Bastide M."/>
            <person name="Hamilton J.P."/>
            <person name="Kanamori H."/>
            <person name="McCombie W.R."/>
            <person name="Ouyang S."/>
            <person name="Schwartz D.C."/>
            <person name="Tanaka T."/>
            <person name="Wu J."/>
            <person name="Zhou S."/>
            <person name="Childs K.L."/>
            <person name="Davidson R.M."/>
            <person name="Lin H."/>
            <person name="Quesada-Ocampo L."/>
            <person name="Vaillancourt B."/>
            <person name="Sakai H."/>
            <person name="Lee S.S."/>
            <person name="Kim J."/>
            <person name="Numa H."/>
            <person name="Itoh T."/>
            <person name="Buell C.R."/>
            <person name="Matsumoto T."/>
        </authorList>
    </citation>
    <scope>GENOME REANNOTATION</scope>
    <source>
        <strain>cv. Nipponbare</strain>
    </source>
</reference>
<reference key="5">
    <citation type="journal article" date="2005" name="PLoS Biol.">
        <title>The genomes of Oryza sativa: a history of duplications.</title>
        <authorList>
            <person name="Yu J."/>
            <person name="Wang J."/>
            <person name="Lin W."/>
            <person name="Li S."/>
            <person name="Li H."/>
            <person name="Zhou J."/>
            <person name="Ni P."/>
            <person name="Dong W."/>
            <person name="Hu S."/>
            <person name="Zeng C."/>
            <person name="Zhang J."/>
            <person name="Zhang Y."/>
            <person name="Li R."/>
            <person name="Xu Z."/>
            <person name="Li S."/>
            <person name="Li X."/>
            <person name="Zheng H."/>
            <person name="Cong L."/>
            <person name="Lin L."/>
            <person name="Yin J."/>
            <person name="Geng J."/>
            <person name="Li G."/>
            <person name="Shi J."/>
            <person name="Liu J."/>
            <person name="Lv H."/>
            <person name="Li J."/>
            <person name="Wang J."/>
            <person name="Deng Y."/>
            <person name="Ran L."/>
            <person name="Shi X."/>
            <person name="Wang X."/>
            <person name="Wu Q."/>
            <person name="Li C."/>
            <person name="Ren X."/>
            <person name="Wang J."/>
            <person name="Wang X."/>
            <person name="Li D."/>
            <person name="Liu D."/>
            <person name="Zhang X."/>
            <person name="Ji Z."/>
            <person name="Zhao W."/>
            <person name="Sun Y."/>
            <person name="Zhang Z."/>
            <person name="Bao J."/>
            <person name="Han Y."/>
            <person name="Dong L."/>
            <person name="Ji J."/>
            <person name="Chen P."/>
            <person name="Wu S."/>
            <person name="Liu J."/>
            <person name="Xiao Y."/>
            <person name="Bu D."/>
            <person name="Tan J."/>
            <person name="Yang L."/>
            <person name="Ye C."/>
            <person name="Zhang J."/>
            <person name="Xu J."/>
            <person name="Zhou Y."/>
            <person name="Yu Y."/>
            <person name="Zhang B."/>
            <person name="Zhuang S."/>
            <person name="Wei H."/>
            <person name="Liu B."/>
            <person name="Lei M."/>
            <person name="Yu H."/>
            <person name="Li Y."/>
            <person name="Xu H."/>
            <person name="Wei S."/>
            <person name="He X."/>
            <person name="Fang L."/>
            <person name="Zhang Z."/>
            <person name="Zhang Y."/>
            <person name="Huang X."/>
            <person name="Su Z."/>
            <person name="Tong W."/>
            <person name="Li J."/>
            <person name="Tong Z."/>
            <person name="Li S."/>
            <person name="Ye J."/>
            <person name="Wang L."/>
            <person name="Fang L."/>
            <person name="Lei T."/>
            <person name="Chen C.-S."/>
            <person name="Chen H.-C."/>
            <person name="Xu Z."/>
            <person name="Li H."/>
            <person name="Huang H."/>
            <person name="Zhang F."/>
            <person name="Xu H."/>
            <person name="Li N."/>
            <person name="Zhao C."/>
            <person name="Li S."/>
            <person name="Dong L."/>
            <person name="Huang Y."/>
            <person name="Li L."/>
            <person name="Xi Y."/>
            <person name="Qi Q."/>
            <person name="Li W."/>
            <person name="Zhang B."/>
            <person name="Hu W."/>
            <person name="Zhang Y."/>
            <person name="Tian X."/>
            <person name="Jiao Y."/>
            <person name="Liang X."/>
            <person name="Jin J."/>
            <person name="Gao L."/>
            <person name="Zheng W."/>
            <person name="Hao B."/>
            <person name="Liu S.-M."/>
            <person name="Wang W."/>
            <person name="Yuan L."/>
            <person name="Cao M."/>
            <person name="McDermott J."/>
            <person name="Samudrala R."/>
            <person name="Wang J."/>
            <person name="Wong G.K.-S."/>
            <person name="Yang H."/>
        </authorList>
    </citation>
    <scope>NUCLEOTIDE SEQUENCE [LARGE SCALE GENOMIC DNA]</scope>
    <source>
        <strain>cv. Nipponbare</strain>
    </source>
</reference>
<reference key="6">
    <citation type="journal article" date="2003" name="Science">
        <title>Collection, mapping, and annotation of over 28,000 cDNA clones from japonica rice.</title>
        <authorList>
            <consortium name="The rice full-length cDNA consortium"/>
        </authorList>
    </citation>
    <scope>NUCLEOTIDE SEQUENCE [LARGE SCALE MRNA]</scope>
    <source>
        <strain>cv. Nipponbare</strain>
    </source>
</reference>
<protein>
    <recommendedName>
        <fullName evidence="5">Very-long-chain (3R)-3-hydroxyacyl-CoA dehydratase PASTICCINO 2A</fullName>
        <ecNumber evidence="3">4.2.1.134</ecNumber>
    </recommendedName>
    <alternativeName>
        <fullName>3-hydroxyacyl-CoA dehydratase PASTICCINO 2A</fullName>
        <shortName>HACD</shortName>
        <shortName>PAS2A</shortName>
    </alternativeName>
    <alternativeName>
        <fullName>Protein tyrosine phosphatase-like protein</fullName>
    </alternativeName>
</protein>
<organism>
    <name type="scientific">Oryza sativa subsp. japonica</name>
    <name type="common">Rice</name>
    <dbReference type="NCBI Taxonomy" id="39947"/>
    <lineage>
        <taxon>Eukaryota</taxon>
        <taxon>Viridiplantae</taxon>
        <taxon>Streptophyta</taxon>
        <taxon>Embryophyta</taxon>
        <taxon>Tracheophyta</taxon>
        <taxon>Spermatophyta</taxon>
        <taxon>Magnoliopsida</taxon>
        <taxon>Liliopsida</taxon>
        <taxon>Poales</taxon>
        <taxon>Poaceae</taxon>
        <taxon>BOP clade</taxon>
        <taxon>Oryzoideae</taxon>
        <taxon>Oryzeae</taxon>
        <taxon>Oryzinae</taxon>
        <taxon>Oryza</taxon>
        <taxon>Oryza sativa</taxon>
    </lineage>
</organism>
<name>HACDA_ORYSJ</name>
<comment type="function">
    <text evidence="3">Catalyzes the third of the four reactions of the long-chain fatty acids elongation cycle. This endoplasmic reticulum-bound enzymatic process, allows the addition of two carbons to the chain of long- and very long-chain fatty acids/VLCFAs per cycle. This enzyme catalyzes the dehydration of the 3-hydroxyacyl-CoA intermediate into trans-2,3-enoyl-CoA, within each cycle of fatty acid elongation. Thereby, it participates in the production of VLCFAs of different chain lengths that are involved in multiple biological processes as precursors of membrane lipids and lipid mediators. May be an anti-phosphatase that prevents CDKA-1 dephosphorylation and activation. Involved in the hormonal control of cell division and differentiation. Required for proliferation control of meristematic and non-meristematic cells. Negative regulator of the cell cycle.</text>
</comment>
<comment type="catalytic activity">
    <reaction evidence="3">
        <text>a very-long-chain (3R)-3-hydroxyacyl-CoA = a very-long-chain (2E)-enoyl-CoA + H2O</text>
        <dbReference type="Rhea" id="RHEA:45812"/>
        <dbReference type="ChEBI" id="CHEBI:15377"/>
        <dbReference type="ChEBI" id="CHEBI:83728"/>
        <dbReference type="ChEBI" id="CHEBI:85440"/>
        <dbReference type="EC" id="4.2.1.134"/>
    </reaction>
</comment>
<comment type="pathway">
    <text evidence="3">Lipid metabolism; fatty acid biosynthesis.</text>
</comment>
<comment type="subcellular location">
    <subcellularLocation>
        <location evidence="1">Endoplasmic reticulum membrane</location>
        <topology evidence="1">Multi-pass membrane protein</topology>
    </subcellularLocation>
</comment>
<comment type="similarity">
    <text evidence="5">Belongs to the very long-chain fatty acids dehydratase HACD family.</text>
</comment>
<feature type="chain" id="PRO_0000372481" description="Very-long-chain (3R)-3-hydroxyacyl-CoA dehydratase PASTICCINO 2A">
    <location>
        <begin position="1"/>
        <end position="221"/>
    </location>
</feature>
<feature type="topological domain" description="Cytoplasmic" evidence="4">
    <location>
        <begin position="1"/>
        <end position="11"/>
    </location>
</feature>
<feature type="transmembrane region" description="Helical" evidence="4">
    <location>
        <begin position="12"/>
        <end position="32"/>
    </location>
</feature>
<feature type="topological domain" description="Lumenal" evidence="4">
    <location>
        <begin position="33"/>
        <end position="51"/>
    </location>
</feature>
<feature type="transmembrane region" description="Helical" evidence="4">
    <location>
        <begin position="52"/>
        <end position="70"/>
    </location>
</feature>
<feature type="topological domain" description="Cytoplasmic" evidence="4">
    <location>
        <begin position="71"/>
        <end position="76"/>
    </location>
</feature>
<feature type="transmembrane region" description="Helical" evidence="4">
    <location>
        <begin position="77"/>
        <end position="95"/>
    </location>
</feature>
<feature type="topological domain" description="Lumenal" evidence="4">
    <location>
        <begin position="96"/>
        <end position="100"/>
    </location>
</feature>
<feature type="transmembrane region" description="Helical" evidence="4">
    <location>
        <begin position="101"/>
        <end position="121"/>
    </location>
</feature>
<feature type="topological domain" description="Cytoplasmic" evidence="4">
    <location>
        <begin position="122"/>
        <end position="141"/>
    </location>
</feature>
<feature type="transmembrane region" description="Helical" evidence="4">
    <location>
        <begin position="142"/>
        <end position="165"/>
    </location>
</feature>
<feature type="topological domain" description="Lumenal" evidence="4">
    <location>
        <begin position="166"/>
        <end position="184"/>
    </location>
</feature>
<feature type="transmembrane region" description="Helical" evidence="4">
    <location>
        <begin position="185"/>
        <end position="209"/>
    </location>
</feature>
<feature type="topological domain" description="Cytoplasmic" evidence="4">
    <location>
        <begin position="210"/>
        <end position="221"/>
    </location>
</feature>
<feature type="active site" evidence="2">
    <location>
        <position position="147"/>
    </location>
</feature>
<feature type="active site" evidence="2">
    <location>
        <position position="154"/>
    </location>
</feature>
<accession>Q7XSZ4</accession>
<accession>A0A0N7KIR2</accession>
<accession>Q7XWV3</accession>
<evidence type="ECO:0000250" key="1"/>
<evidence type="ECO:0000250" key="2">
    <source>
        <dbReference type="UniProtKB" id="P40857"/>
    </source>
</evidence>
<evidence type="ECO:0000250" key="3">
    <source>
        <dbReference type="UniProtKB" id="Q8VZB2"/>
    </source>
</evidence>
<evidence type="ECO:0000255" key="4"/>
<evidence type="ECO:0000305" key="5"/>
<keyword id="KW-0217">Developmental protein</keyword>
<keyword id="KW-0256">Endoplasmic reticulum</keyword>
<keyword id="KW-0275">Fatty acid biosynthesis</keyword>
<keyword id="KW-0276">Fatty acid metabolism</keyword>
<keyword id="KW-0444">Lipid biosynthesis</keyword>
<keyword id="KW-0443">Lipid metabolism</keyword>
<keyword id="KW-0456">Lyase</keyword>
<keyword id="KW-0472">Membrane</keyword>
<keyword id="KW-1185">Reference proteome</keyword>
<keyword id="KW-0812">Transmembrane</keyword>
<keyword id="KW-1133">Transmembrane helix</keyword>
<proteinExistence type="evidence at transcript level"/>
<gene>
    <name type="primary">PAS2A</name>
    <name type="ordered locus">Os04g0271200</name>
    <name type="ordered locus">LOC_Os04g20280</name>
    <name type="ORF">OsJ_14083</name>
    <name type="ORF">OSJNBb0056F09.1</name>
    <name type="ORF">OSJNBb0067G11.14</name>
</gene>
<sequence length="221" mass="25017">MAGVGSAVRRLYLSVYNWAVFFGWAQVLYYAVTTLLESGHEAVYAAVERPLQFAQTAAFLEILHGLVGLVRSPVSATLPQIGSRLFLTWGILWSFPETHSHILVTSLVISWSITEIIRYSFFGMKEAFGFAPSWLLWLRYSTFMVLYPTGISSEVGLIYIALPYMKASEKYCLRMPNKWNFSFDFFYASILSLAIYVPGSPHMFTYMLAQRKKALAKAKAA</sequence>